<dbReference type="EMBL" id="AY243312">
    <property type="protein sequence ID" value="AAO89414.1"/>
    <property type="molecule type" value="Genomic_DNA"/>
</dbReference>
<dbReference type="DNASU" id="3707533"/>
<dbReference type="KEGG" id="vg:3707533"/>
<dbReference type="Proteomes" id="UP000000344">
    <property type="component" value="Genome"/>
</dbReference>
<dbReference type="GO" id="GO:0030430">
    <property type="term" value="C:host cell cytoplasm"/>
    <property type="evidence" value="ECO:0007669"/>
    <property type="project" value="UniProtKB-SubCell"/>
</dbReference>
<dbReference type="GO" id="GO:0044423">
    <property type="term" value="C:virion component"/>
    <property type="evidence" value="ECO:0007669"/>
    <property type="project" value="UniProtKB-KW"/>
</dbReference>
<dbReference type="GO" id="GO:0005524">
    <property type="term" value="F:ATP binding"/>
    <property type="evidence" value="ECO:0007669"/>
    <property type="project" value="UniProtKB-KW"/>
</dbReference>
<dbReference type="GO" id="GO:0003677">
    <property type="term" value="F:DNA binding"/>
    <property type="evidence" value="ECO:0007669"/>
    <property type="project" value="UniProtKB-KW"/>
</dbReference>
<dbReference type="GO" id="GO:0004386">
    <property type="term" value="F:helicase activity"/>
    <property type="evidence" value="ECO:0007669"/>
    <property type="project" value="UniProtKB-KW"/>
</dbReference>
<dbReference type="GO" id="GO:0016787">
    <property type="term" value="F:hydrolase activity"/>
    <property type="evidence" value="ECO:0007669"/>
    <property type="project" value="UniProtKB-KW"/>
</dbReference>
<dbReference type="GO" id="GO:0006353">
    <property type="term" value="P:DNA-templated transcription termination"/>
    <property type="evidence" value="ECO:0007669"/>
    <property type="project" value="UniProtKB-KW"/>
</dbReference>
<dbReference type="InterPro" id="IPR008445">
    <property type="entry name" value="A15"/>
</dbReference>
<dbReference type="Pfam" id="PF05846">
    <property type="entry name" value="Chordopox_A15"/>
    <property type="match status" value="1"/>
</dbReference>
<protein>
    <recommendedName>
        <fullName>Core protein OPG142</fullName>
    </recommendedName>
</protein>
<gene>
    <name type="primary">OPG142</name>
    <name type="ordered locus">VACWR135</name>
</gene>
<comment type="function">
    <text evidence="1">Late protein which is a part of a large complex required for early virion morphogenesis. This complex participates in the formation of virosomes and the incorporation of virosomal contents into nascent immature virions. Required for the stability and kinase activity of OPG054.</text>
</comment>
<comment type="subunit">
    <text evidence="1">Part of a complex composed of the kinase OPG054, OPG092, OPG100, OPG114, OPG115, OPG142 and OPG157.</text>
</comment>
<comment type="subcellular location">
    <subcellularLocation>
        <location evidence="3">Host cytoplasm</location>
    </subcellularLocation>
    <subcellularLocation>
        <location evidence="1">Virion</location>
    </subcellularLocation>
    <text evidence="2">Localizes in cytoplasmic virus factories and present in the virion core.</text>
</comment>
<comment type="similarity">
    <text evidence="2">Belongs to the orthopoxvirus OPG142 family.</text>
</comment>
<proteinExistence type="evidence at transcript level"/>
<organism>
    <name type="scientific">Vaccinia virus (strain Western Reserve)</name>
    <name type="common">VACV</name>
    <name type="synonym">Vaccinia virus (strain WR)</name>
    <dbReference type="NCBI Taxonomy" id="10254"/>
    <lineage>
        <taxon>Viruses</taxon>
        <taxon>Varidnaviria</taxon>
        <taxon>Bamfordvirae</taxon>
        <taxon>Nucleocytoviricota</taxon>
        <taxon>Pokkesviricetes</taxon>
        <taxon>Chitovirales</taxon>
        <taxon>Poxviridae</taxon>
        <taxon>Chordopoxvirinae</taxon>
        <taxon>Orthopoxvirus</taxon>
        <taxon>Vaccinia virus</taxon>
    </lineage>
</organism>
<keyword id="KW-0067">ATP-binding</keyword>
<keyword id="KW-0238">DNA-binding</keyword>
<keyword id="KW-0347">Helicase</keyword>
<keyword id="KW-1035">Host cytoplasm</keyword>
<keyword id="KW-0378">Hydrolase</keyword>
<keyword id="KW-0426">Late protein</keyword>
<keyword id="KW-0547">Nucleotide-binding</keyword>
<keyword id="KW-0597">Phosphoprotein</keyword>
<keyword id="KW-1185">Reference proteome</keyword>
<keyword id="KW-0804">Transcription</keyword>
<keyword id="KW-0805">Transcription regulation</keyword>
<keyword id="KW-0806">Transcription termination</keyword>
<keyword id="KW-0946">Virion</keyword>
<reference key="1">
    <citation type="submission" date="2003-02" db="EMBL/GenBank/DDBJ databases">
        <title>Sequencing of the coding region of Vaccinia-WR to an average 9-fold redundancy and an error rate of 0.16/10kb.</title>
        <authorList>
            <person name="Esposito J.J."/>
            <person name="Frace A.M."/>
            <person name="Sammons S.A."/>
            <person name="Olsen-Rasmussen M."/>
            <person name="Osborne J."/>
            <person name="Wohlhueter R."/>
        </authorList>
    </citation>
    <scope>NUCLEOTIDE SEQUENCE [LARGE SCALE GENOMIC DNA]</scope>
</reference>
<reference key="2">
    <citation type="journal article" date="2004" name="Virology">
        <title>A complex of seven vaccinia virus proteins conserved in all chordopoxviruses is required for the association of membranes and viroplasm to form immature virions.</title>
        <authorList>
            <person name="Szajner P."/>
            <person name="Jaffe H."/>
            <person name="Weisberg A.S."/>
            <person name="Moss B."/>
        </authorList>
    </citation>
    <scope>IDENTIFICATION IN COMPLEX WITH OPG054; OPG092; OPG100; OPG114; OPG115 AND OPG157</scope>
    <scope>FUNCTION</scope>
    <scope>INDUCTION</scope>
    <scope>SUBCELLULAR LOCATION</scope>
</reference>
<sequence>MFVDDNSLIIYSTWPSTLSDSSGRVIVMPDNRSFTFKEGFKLDESIKSILLVNPSSIDLLKIRVYKHRIKWMGDIFVLFEQENIPPPFRLVNDK</sequence>
<organismHost>
    <name type="scientific">Bos taurus</name>
    <name type="common">Bovine</name>
    <dbReference type="NCBI Taxonomy" id="9913"/>
</organismHost>
<accession>P68718</accession>
<accession>Q76ZQ2</accession>
<name>PG142_VACCW</name>
<evidence type="ECO:0000269" key="1">
    <source>
    </source>
</evidence>
<evidence type="ECO:0000305" key="2"/>
<evidence type="ECO:0000305" key="3">
    <source>
    </source>
</evidence>
<feature type="chain" id="PRO_0000099247" description="Core protein OPG142">
    <location>
        <begin position="1"/>
        <end position="94"/>
    </location>
</feature>